<organism>
    <name type="scientific">Mus musculus</name>
    <name type="common">Mouse</name>
    <dbReference type="NCBI Taxonomy" id="10090"/>
    <lineage>
        <taxon>Eukaryota</taxon>
        <taxon>Metazoa</taxon>
        <taxon>Chordata</taxon>
        <taxon>Craniata</taxon>
        <taxon>Vertebrata</taxon>
        <taxon>Euteleostomi</taxon>
        <taxon>Mammalia</taxon>
        <taxon>Eutheria</taxon>
        <taxon>Euarchontoglires</taxon>
        <taxon>Glires</taxon>
        <taxon>Rodentia</taxon>
        <taxon>Myomorpha</taxon>
        <taxon>Muroidea</taxon>
        <taxon>Muridae</taxon>
        <taxon>Murinae</taxon>
        <taxon>Mus</taxon>
        <taxon>Mus</taxon>
    </lineage>
</organism>
<reference key="1">
    <citation type="submission" date="1996-06" db="EMBL/GenBank/DDBJ databases">
        <title>Down-regulation of CAPS (Ca(2+)-dependent activator for secretion) during nerve regeneration.</title>
        <authorList>
            <person name="Namikawa K."/>
            <person name="Su Q.N."/>
            <person name="Toki H."/>
            <person name="Kiyama H."/>
        </authorList>
    </citation>
    <scope>NUCLEOTIDE SEQUENCE [MRNA] (ISOFORM 2)</scope>
    <source>
        <strain>BALB/cJ</strain>
        <tissue>Brain</tissue>
    </source>
</reference>
<reference key="2">
    <citation type="journal article" date="2003" name="DNA Res.">
        <title>Prediction of the coding sequences of mouse homologues of KIAA gene: II. The complete nucleotide sequences of 400 mouse KIAA-homologous cDNAs identified by screening of terminal sequences of cDNA clones randomly sampled from size-fractionated libraries.</title>
        <authorList>
            <person name="Okazaki N."/>
            <person name="Kikuno R."/>
            <person name="Ohara R."/>
            <person name="Inamoto S."/>
            <person name="Aizawa H."/>
            <person name="Yuasa S."/>
            <person name="Nakajima D."/>
            <person name="Nagase T."/>
            <person name="Ohara O."/>
            <person name="Koga H."/>
        </authorList>
    </citation>
    <scope>NUCLEOTIDE SEQUENCE [LARGE SCALE MRNA] (ISOFORM 1)</scope>
    <source>
        <tissue>Brain</tissue>
    </source>
</reference>
<reference key="3">
    <citation type="journal article" date="2009" name="PLoS Biol.">
        <title>Lineage-specific biology revealed by a finished genome assembly of the mouse.</title>
        <authorList>
            <person name="Church D.M."/>
            <person name="Goodstadt L."/>
            <person name="Hillier L.W."/>
            <person name="Zody M.C."/>
            <person name="Goldstein S."/>
            <person name="She X."/>
            <person name="Bult C.J."/>
            <person name="Agarwala R."/>
            <person name="Cherry J.L."/>
            <person name="DiCuccio M."/>
            <person name="Hlavina W."/>
            <person name="Kapustin Y."/>
            <person name="Meric P."/>
            <person name="Maglott D."/>
            <person name="Birtle Z."/>
            <person name="Marques A.C."/>
            <person name="Graves T."/>
            <person name="Zhou S."/>
            <person name="Teague B."/>
            <person name="Potamousis K."/>
            <person name="Churas C."/>
            <person name="Place M."/>
            <person name="Herschleb J."/>
            <person name="Runnheim R."/>
            <person name="Forrest D."/>
            <person name="Amos-Landgraf J."/>
            <person name="Schwartz D.C."/>
            <person name="Cheng Z."/>
            <person name="Lindblad-Toh K."/>
            <person name="Eichler E.E."/>
            <person name="Ponting C.P."/>
        </authorList>
    </citation>
    <scope>NUCLEOTIDE SEQUENCE [LARGE SCALE GENOMIC DNA]</scope>
    <source>
        <strain>C57BL/6J</strain>
    </source>
</reference>
<reference key="4">
    <citation type="journal article" date="2005" name="Science">
        <title>The transcriptional landscape of the mammalian genome.</title>
        <authorList>
            <person name="Carninci P."/>
            <person name="Kasukawa T."/>
            <person name="Katayama S."/>
            <person name="Gough J."/>
            <person name="Frith M.C."/>
            <person name="Maeda N."/>
            <person name="Oyama R."/>
            <person name="Ravasi T."/>
            <person name="Lenhard B."/>
            <person name="Wells C."/>
            <person name="Kodzius R."/>
            <person name="Shimokawa K."/>
            <person name="Bajic V.B."/>
            <person name="Brenner S.E."/>
            <person name="Batalov S."/>
            <person name="Forrest A.R."/>
            <person name="Zavolan M."/>
            <person name="Davis M.J."/>
            <person name="Wilming L.G."/>
            <person name="Aidinis V."/>
            <person name="Allen J.E."/>
            <person name="Ambesi-Impiombato A."/>
            <person name="Apweiler R."/>
            <person name="Aturaliya R.N."/>
            <person name="Bailey T.L."/>
            <person name="Bansal M."/>
            <person name="Baxter L."/>
            <person name="Beisel K.W."/>
            <person name="Bersano T."/>
            <person name="Bono H."/>
            <person name="Chalk A.M."/>
            <person name="Chiu K.P."/>
            <person name="Choudhary V."/>
            <person name="Christoffels A."/>
            <person name="Clutterbuck D.R."/>
            <person name="Crowe M.L."/>
            <person name="Dalla E."/>
            <person name="Dalrymple B.P."/>
            <person name="de Bono B."/>
            <person name="Della Gatta G."/>
            <person name="di Bernardo D."/>
            <person name="Down T."/>
            <person name="Engstrom P."/>
            <person name="Fagiolini M."/>
            <person name="Faulkner G."/>
            <person name="Fletcher C.F."/>
            <person name="Fukushima T."/>
            <person name="Furuno M."/>
            <person name="Futaki S."/>
            <person name="Gariboldi M."/>
            <person name="Georgii-Hemming P."/>
            <person name="Gingeras T.R."/>
            <person name="Gojobori T."/>
            <person name="Green R.E."/>
            <person name="Gustincich S."/>
            <person name="Harbers M."/>
            <person name="Hayashi Y."/>
            <person name="Hensch T.K."/>
            <person name="Hirokawa N."/>
            <person name="Hill D."/>
            <person name="Huminiecki L."/>
            <person name="Iacono M."/>
            <person name="Ikeo K."/>
            <person name="Iwama A."/>
            <person name="Ishikawa T."/>
            <person name="Jakt M."/>
            <person name="Kanapin A."/>
            <person name="Katoh M."/>
            <person name="Kawasawa Y."/>
            <person name="Kelso J."/>
            <person name="Kitamura H."/>
            <person name="Kitano H."/>
            <person name="Kollias G."/>
            <person name="Krishnan S.P."/>
            <person name="Kruger A."/>
            <person name="Kummerfeld S.K."/>
            <person name="Kurochkin I.V."/>
            <person name="Lareau L.F."/>
            <person name="Lazarevic D."/>
            <person name="Lipovich L."/>
            <person name="Liu J."/>
            <person name="Liuni S."/>
            <person name="McWilliam S."/>
            <person name="Madan Babu M."/>
            <person name="Madera M."/>
            <person name="Marchionni L."/>
            <person name="Matsuda H."/>
            <person name="Matsuzawa S."/>
            <person name="Miki H."/>
            <person name="Mignone F."/>
            <person name="Miyake S."/>
            <person name="Morris K."/>
            <person name="Mottagui-Tabar S."/>
            <person name="Mulder N."/>
            <person name="Nakano N."/>
            <person name="Nakauchi H."/>
            <person name="Ng P."/>
            <person name="Nilsson R."/>
            <person name="Nishiguchi S."/>
            <person name="Nishikawa S."/>
            <person name="Nori F."/>
            <person name="Ohara O."/>
            <person name="Okazaki Y."/>
            <person name="Orlando V."/>
            <person name="Pang K.C."/>
            <person name="Pavan W.J."/>
            <person name="Pavesi G."/>
            <person name="Pesole G."/>
            <person name="Petrovsky N."/>
            <person name="Piazza S."/>
            <person name="Reed J."/>
            <person name="Reid J.F."/>
            <person name="Ring B.Z."/>
            <person name="Ringwald M."/>
            <person name="Rost B."/>
            <person name="Ruan Y."/>
            <person name="Salzberg S.L."/>
            <person name="Sandelin A."/>
            <person name="Schneider C."/>
            <person name="Schoenbach C."/>
            <person name="Sekiguchi K."/>
            <person name="Semple C.A."/>
            <person name="Seno S."/>
            <person name="Sessa L."/>
            <person name="Sheng Y."/>
            <person name="Shibata Y."/>
            <person name="Shimada H."/>
            <person name="Shimada K."/>
            <person name="Silva D."/>
            <person name="Sinclair B."/>
            <person name="Sperling S."/>
            <person name="Stupka E."/>
            <person name="Sugiura K."/>
            <person name="Sultana R."/>
            <person name="Takenaka Y."/>
            <person name="Taki K."/>
            <person name="Tammoja K."/>
            <person name="Tan S.L."/>
            <person name="Tang S."/>
            <person name="Taylor M.S."/>
            <person name="Tegner J."/>
            <person name="Teichmann S.A."/>
            <person name="Ueda H.R."/>
            <person name="van Nimwegen E."/>
            <person name="Verardo R."/>
            <person name="Wei C.L."/>
            <person name="Yagi K."/>
            <person name="Yamanishi H."/>
            <person name="Zabarovsky E."/>
            <person name="Zhu S."/>
            <person name="Zimmer A."/>
            <person name="Hide W."/>
            <person name="Bult C."/>
            <person name="Grimmond S.M."/>
            <person name="Teasdale R.D."/>
            <person name="Liu E.T."/>
            <person name="Brusic V."/>
            <person name="Quackenbush J."/>
            <person name="Wahlestedt C."/>
            <person name="Mattick J.S."/>
            <person name="Hume D.A."/>
            <person name="Kai C."/>
            <person name="Sasaki D."/>
            <person name="Tomaru Y."/>
            <person name="Fukuda S."/>
            <person name="Kanamori-Katayama M."/>
            <person name="Suzuki M."/>
            <person name="Aoki J."/>
            <person name="Arakawa T."/>
            <person name="Iida J."/>
            <person name="Imamura K."/>
            <person name="Itoh M."/>
            <person name="Kato T."/>
            <person name="Kawaji H."/>
            <person name="Kawagashira N."/>
            <person name="Kawashima T."/>
            <person name="Kojima M."/>
            <person name="Kondo S."/>
            <person name="Konno H."/>
            <person name="Nakano K."/>
            <person name="Ninomiya N."/>
            <person name="Nishio T."/>
            <person name="Okada M."/>
            <person name="Plessy C."/>
            <person name="Shibata K."/>
            <person name="Shiraki T."/>
            <person name="Suzuki S."/>
            <person name="Tagami M."/>
            <person name="Waki K."/>
            <person name="Watahiki A."/>
            <person name="Okamura-Oho Y."/>
            <person name="Suzuki H."/>
            <person name="Kawai J."/>
            <person name="Hayashizaki Y."/>
        </authorList>
    </citation>
    <scope>NUCLEOTIDE SEQUENCE [LARGE SCALE MRNA] OF 693-1355</scope>
    <source>
        <strain>C57BL/6J</strain>
        <tissue>Olfactory bulb</tissue>
    </source>
</reference>
<reference key="5">
    <citation type="journal article" date="2004" name="Genome Res.">
        <title>The status, quality, and expansion of the NIH full-length cDNA project: the Mammalian Gene Collection (MGC).</title>
        <authorList>
            <consortium name="The MGC Project Team"/>
        </authorList>
    </citation>
    <scope>NUCLEOTIDE SEQUENCE [LARGE SCALE MRNA] OF 763-1355 (ISOFORM 4)</scope>
    <source>
        <strain>C57BL/6J</strain>
        <tissue>Brain</tissue>
    </source>
</reference>
<reference key="6">
    <citation type="journal article" date="2003" name="J. Biol. Chem.">
        <title>A family of Ca2+-dependent activator proteins for secretion: comparative analysis of structure, expression, localization, and function.</title>
        <authorList>
            <person name="Speidel D."/>
            <person name="Varoqueaux F."/>
            <person name="Enk C."/>
            <person name="Nojiri M."/>
            <person name="Grishanin R.N."/>
            <person name="Martin T.F.J."/>
            <person name="Hofmann K."/>
            <person name="Brose N."/>
            <person name="Reim K."/>
        </authorList>
    </citation>
    <scope>SUBCELLULAR LOCATION</scope>
    <scope>TISSUE SPECIFICITY</scope>
</reference>
<reference key="7">
    <citation type="journal article" date="2005" name="Neuron">
        <title>CAPS1 regulates catecholamine loading of large dense-core vesicles.</title>
        <authorList>
            <person name="Speidel D."/>
            <person name="Bruederle C.E."/>
            <person name="Enk C."/>
            <person name="Voets T."/>
            <person name="Varoqueaux F."/>
            <person name="Reim K."/>
            <person name="Becherer U."/>
            <person name="Fornai F."/>
            <person name="Ruggieri S."/>
            <person name="Holighaus Y."/>
            <person name="Weihe E."/>
            <person name="Bruns D."/>
            <person name="Brose N."/>
            <person name="Rettig J."/>
        </authorList>
    </citation>
    <scope>FUNCTION</scope>
    <scope>SUBCELLULAR LOCATION</scope>
    <scope>TISSUE SPECIFICITY</scope>
    <scope>DISRUPTION PHENOTYPE</scope>
</reference>
<reference key="8">
    <citation type="journal article" date="2005" name="Neuron">
        <title>CAPS in search of a lost function.</title>
        <authorList>
            <person name="Suedhof T.C."/>
        </authorList>
    </citation>
    <scope>REVIEW</scope>
</reference>
<reference key="9">
    <citation type="journal article" date="2007" name="J. Cell Biol.">
        <title>Regulation of atrial natriuretic peptide secretion by a novel Ras-like protein.</title>
        <authorList>
            <person name="Rybkin I.I."/>
            <person name="Kim M.S."/>
            <person name="Bezprozvannaya S."/>
            <person name="Qi X."/>
            <person name="Richardson J.A."/>
            <person name="Plato C.F."/>
            <person name="Hill J.A."/>
            <person name="Bassel-Duby R."/>
            <person name="Olson E.N."/>
        </authorList>
    </citation>
    <scope>INTERACTION WITH RASL10B</scope>
    <scope>INDUCTION</scope>
    <scope>TISSUE SPECIFICITY</scope>
</reference>
<reference key="10">
    <citation type="journal article" date="2010" name="Cell">
        <title>A tissue-specific atlas of mouse protein phosphorylation and expression.</title>
        <authorList>
            <person name="Huttlin E.L."/>
            <person name="Jedrychowski M.P."/>
            <person name="Elias J.E."/>
            <person name="Goswami T."/>
            <person name="Rad R."/>
            <person name="Beausoleil S.A."/>
            <person name="Villen J."/>
            <person name="Haas W."/>
            <person name="Sowa M.E."/>
            <person name="Gygi S.P."/>
        </authorList>
    </citation>
    <scope>PHOSPHORYLATION [LARGE SCALE ANALYSIS] AT SER-34</scope>
    <scope>IDENTIFICATION BY MASS SPECTROMETRY [LARGE SCALE ANALYSIS]</scope>
    <source>
        <tissue>Brain</tissue>
        <tissue>Brown adipose tissue</tissue>
    </source>
</reference>
<gene>
    <name type="primary">Cadps</name>
    <name type="synonym">Caps</name>
    <name type="synonym">Caps1</name>
    <name type="synonym">Kiaa1121</name>
</gene>
<comment type="function">
    <text evidence="1 8">Calcium-binding protein involved in exocytosis of vesicles filled with neurotransmitters and neuropeptides. Probably acts upstream of fusion in the biogenesis or maintenance of mature secretory vesicles. Regulates catecholamine loading of DCVs. May specifically mediate the Ca(2+)-dependent exocytosis of large dense-core vesicles (DCVs) and other dense-core vesicles by acting as a PtdIns(4,5)P2-binding protein that acts at prefusion step following ATP-dependent priming and participates in DCVs-membrane fusion. However, it may also participate in small clear synaptic vesicles (SVs) exocytosis and it is unclear whether its function is related to Ca(2+) triggering (By similarity).</text>
</comment>
<comment type="subunit">
    <text evidence="1 9">Homodimer. Interacts with the dopamine receptor DRD2 (By similarity). Interacts with RASL10B.</text>
</comment>
<comment type="subcellular location">
    <subcellularLocation>
        <location evidence="7">Synapse</location>
    </subcellularLocation>
    <subcellularLocation>
        <location evidence="2">Cytoplasmic vesicle</location>
        <location evidence="2">Secretory vesicle</location>
        <location evidence="2">Neuronal dense core vesicle membrane</location>
        <topology evidence="2">Peripheral membrane protein</topology>
    </subcellularLocation>
    <text evidence="7 8">Membrane-associated to vesicles. Strongly enriched in synaptic fractions. Preferentially binds to dense core vesicles but not to synaptic vesicles. Binds phosphoinosides, with a strong selectivity for PtdIns(4,5)P2 over PtdIns(3,4,5)P3. Probably localizes to different vesicles compared to CADPS2.</text>
</comment>
<comment type="alternative products">
    <event type="alternative splicing"/>
    <isoform>
        <id>Q80TJ1-1</id>
        <name>1</name>
        <sequence type="displayed"/>
    </isoform>
    <isoform>
        <id>Q80TJ1-2</id>
        <name>2</name>
        <sequence type="described" ref="VSP_016809 VSP_016811 VSP_016813"/>
    </isoform>
    <isoform>
        <id>Q80TJ1-4</id>
        <name>4</name>
        <sequence type="described" ref="VSP_016814"/>
    </isoform>
</comment>
<comment type="tissue specificity">
    <text evidence="7 8 9">Present in brain and adrenal glands (at protein level). Specifically expressed in neural and endocrine secretory tissues. Strongly expressed in almost all nerve cells of the brain, although it is absent from glial cells. Expressed in the cardiac atria, but not ventricles.</text>
</comment>
<comment type="developmental stage">
    <text>During brain development, its expression is similar to that of synaptic markers. Expression is first detectable late in embryogenesis (14 dpc) and increases to reach a plateau about 20 days after birth, when most synapses have been formed (at protein level).</text>
</comment>
<comment type="induction">
    <text evidence="9">In the heart, up-regulated by hypertrophic stimuli.</text>
</comment>
<comment type="domain">
    <text evidence="1">The PH domain is essential for regulated exocytosis and binds phospholipids and plasma membrane. It however does not mediate binding to DCVs (By similarity).</text>
</comment>
<comment type="disruption phenotype">
    <text evidence="8">Mice die within 30 minutes after birth but do not display obvious developmental or biochemical abnormalities. They show a strong reduction in the frequency of amperometrically detectable release events of transmitter-filled vesicles, while the total number of fusing vesicles, as judged by capacitance recordings or total internal reflection microscopy, remains unchanged.</text>
</comment>
<comment type="sequence caution" evidence="12">
    <conflict type="miscellaneous discrepancy">
        <sequence resource="EMBL-CDS" id="BAA13044"/>
    </conflict>
    <text>The sequence differs from that shown due to a duplication of 90 bp after position 107.</text>
</comment>
<comment type="sequence caution" evidence="12">
    <conflict type="erroneous initiation">
        <sequence resource="EMBL-CDS" id="BAC65735"/>
    </conflict>
    <text>Extended N-terminus.</text>
</comment>
<feature type="chain" id="PRO_0000053865" description="Calcium-dependent secretion activator 1">
    <location>
        <begin position="1"/>
        <end position="1355"/>
    </location>
</feature>
<feature type="domain" description="C2" evidence="3">
    <location>
        <begin position="378"/>
        <end position="493"/>
    </location>
</feature>
<feature type="domain" description="PH" evidence="4">
    <location>
        <begin position="519"/>
        <end position="622"/>
    </location>
</feature>
<feature type="domain" description="MHD1" evidence="5">
    <location>
        <begin position="933"/>
        <end position="1113"/>
    </location>
</feature>
<feature type="region of interest" description="Disordered" evidence="6">
    <location>
        <begin position="1"/>
        <end position="107"/>
    </location>
</feature>
<feature type="region of interest" description="Interaction with DRD2" evidence="1">
    <location>
        <begin position="792"/>
        <end position="1131"/>
    </location>
</feature>
<feature type="region of interest" description="Mediates targeting and association with DCVs" evidence="1">
    <location>
        <begin position="1179"/>
        <end position="1355"/>
    </location>
</feature>
<feature type="region of interest" description="Disordered" evidence="6">
    <location>
        <begin position="1331"/>
        <end position="1355"/>
    </location>
</feature>
<feature type="compositionally biased region" description="Acidic residues" evidence="6">
    <location>
        <begin position="1"/>
        <end position="16"/>
    </location>
</feature>
<feature type="compositionally biased region" description="Gly residues" evidence="6">
    <location>
        <begin position="44"/>
        <end position="75"/>
    </location>
</feature>
<feature type="compositionally biased region" description="Basic and acidic residues" evidence="6">
    <location>
        <begin position="96"/>
        <end position="107"/>
    </location>
</feature>
<feature type="modified residue" description="Phosphoserine" evidence="13">
    <location>
        <position position="34"/>
    </location>
</feature>
<feature type="modified residue" description="Phosphoserine" evidence="2">
    <location>
        <position position="89"/>
    </location>
</feature>
<feature type="modified residue" description="Phosphoserine" evidence="2">
    <location>
        <position position="96"/>
    </location>
</feature>
<feature type="modified residue" description="Phosphoserine" evidence="2">
    <location>
        <position position="259"/>
    </location>
</feature>
<feature type="splice variant" id="VSP_016809" description="In isoform 2." evidence="11">
    <original>SGLKD</original>
    <variation>Y</variation>
    <location>
        <begin position="654"/>
        <end position="658"/>
    </location>
</feature>
<feature type="splice variant" id="VSP_016811" description="In isoform 2." evidence="11">
    <original>ENQKDAE</original>
    <variation>GKKREMYEHPVFCLASQVMDLTIQ</variation>
    <location>
        <begin position="863"/>
        <end position="869"/>
    </location>
</feature>
<feature type="splice variant" id="VSP_016813" description="In isoform 2." evidence="11">
    <location>
        <begin position="904"/>
        <end position="910"/>
    </location>
</feature>
<feature type="splice variant" id="VSP_016814" description="In isoform 4." evidence="10">
    <original>PHVDKG</original>
    <variation>GK</variation>
    <location>
        <begin position="905"/>
        <end position="910"/>
    </location>
</feature>
<feature type="sequence conflict" description="In Ref. 1; BAA13044 and 2; BAC65735." evidence="12" ref="1 2">
    <original>R</original>
    <variation>S</variation>
    <location>
        <position position="19"/>
    </location>
</feature>
<feature type="sequence conflict" description="In Ref. 2; BAC65735." evidence="12" ref="2">
    <original>R</original>
    <variation>W</variation>
    <location>
        <position position="86"/>
    </location>
</feature>
<feature type="sequence conflict" description="In Ref. 4; BAE36633." evidence="12" ref="4">
    <original>D</original>
    <variation>V</variation>
    <location>
        <position position="908"/>
    </location>
</feature>
<feature type="sequence conflict" description="In Ref. 4; BAE36633." evidence="12" ref="4">
    <original>P</original>
    <variation>S</variation>
    <location>
        <position position="1034"/>
    </location>
</feature>
<feature type="sequence conflict" description="In Ref. 4; BAE36633." evidence="12" ref="4">
    <original>E</original>
    <variation>G</variation>
    <location>
        <position position="1252"/>
    </location>
</feature>
<feature type="sequence conflict" description="In Ref. 1; BAA13044." evidence="12" ref="1">
    <original>D</original>
    <variation>E</variation>
    <location>
        <position position="1354"/>
    </location>
</feature>
<dbReference type="EMBL" id="D86214">
    <property type="protein sequence ID" value="BAA13044.1"/>
    <property type="status" value="ALT_SEQ"/>
    <property type="molecule type" value="mRNA"/>
</dbReference>
<dbReference type="EMBL" id="AK122453">
    <property type="protein sequence ID" value="BAC65735.1"/>
    <property type="status" value="ALT_INIT"/>
    <property type="molecule type" value="mRNA"/>
</dbReference>
<dbReference type="EMBL" id="AC116395">
    <property type="status" value="NOT_ANNOTATED_CDS"/>
    <property type="molecule type" value="Genomic_DNA"/>
</dbReference>
<dbReference type="EMBL" id="AC154250">
    <property type="status" value="NOT_ANNOTATED_CDS"/>
    <property type="molecule type" value="Genomic_DNA"/>
</dbReference>
<dbReference type="EMBL" id="AC154592">
    <property type="status" value="NOT_ANNOTATED_CDS"/>
    <property type="molecule type" value="Genomic_DNA"/>
</dbReference>
<dbReference type="EMBL" id="AC156025">
    <property type="status" value="NOT_ANNOTATED_CDS"/>
    <property type="molecule type" value="Genomic_DNA"/>
</dbReference>
<dbReference type="EMBL" id="AK161919">
    <property type="protein sequence ID" value="BAE36633.1"/>
    <property type="molecule type" value="mRNA"/>
</dbReference>
<dbReference type="EMBL" id="BC057065">
    <property type="protein sequence ID" value="AAH57065.1"/>
    <property type="molecule type" value="mRNA"/>
</dbReference>
<dbReference type="CCDS" id="CCDS36806.1">
    <molecule id="Q80TJ1-2"/>
</dbReference>
<dbReference type="CCDS" id="CCDS36807.1">
    <molecule id="Q80TJ1-1"/>
</dbReference>
<dbReference type="RefSeq" id="NP_001036082.1">
    <molecule id="Q80TJ1-1"/>
    <property type="nucleotide sequence ID" value="NM_001042617.1"/>
</dbReference>
<dbReference type="RefSeq" id="NP_001346848.1">
    <molecule id="Q80TJ1-4"/>
    <property type="nucleotide sequence ID" value="NM_001359919.1"/>
</dbReference>
<dbReference type="RefSeq" id="NP_036191.2">
    <molecule id="Q80TJ1-2"/>
    <property type="nucleotide sequence ID" value="NM_012061.3"/>
</dbReference>
<dbReference type="RefSeq" id="XP_006518098.1">
    <property type="nucleotide sequence ID" value="XM_006518035.3"/>
</dbReference>
<dbReference type="SMR" id="Q80TJ1"/>
<dbReference type="BioGRID" id="205117">
    <property type="interactions" value="10"/>
</dbReference>
<dbReference type="FunCoup" id="Q80TJ1">
    <property type="interactions" value="484"/>
</dbReference>
<dbReference type="IntAct" id="Q80TJ1">
    <property type="interactions" value="4"/>
</dbReference>
<dbReference type="MINT" id="Q80TJ1"/>
<dbReference type="STRING" id="10090.ENSMUSP00000064706"/>
<dbReference type="GlyGen" id="Q80TJ1">
    <property type="glycosylation" value="4 sites, 1 O-linked glycan (4 sites)"/>
</dbReference>
<dbReference type="iPTMnet" id="Q80TJ1"/>
<dbReference type="MetOSite" id="Q80TJ1"/>
<dbReference type="PhosphoSitePlus" id="Q80TJ1"/>
<dbReference type="SwissPalm" id="Q80TJ1"/>
<dbReference type="PaxDb" id="10090-ENSMUSP00000064706"/>
<dbReference type="PeptideAtlas" id="Q80TJ1"/>
<dbReference type="ProteomicsDB" id="265528">
    <molecule id="Q80TJ1-1"/>
</dbReference>
<dbReference type="ProteomicsDB" id="265529">
    <molecule id="Q80TJ1-2"/>
</dbReference>
<dbReference type="ProteomicsDB" id="265530">
    <molecule id="Q80TJ1-4"/>
</dbReference>
<dbReference type="Pumba" id="Q80TJ1"/>
<dbReference type="DNASU" id="27062"/>
<dbReference type="Ensembl" id="ENSMUST00000067491.14">
    <molecule id="Q80TJ1-2"/>
    <property type="protein sequence ID" value="ENSMUSP00000064706.7"/>
    <property type="gene ID" value="ENSMUSG00000054423.16"/>
</dbReference>
<dbReference type="Ensembl" id="ENSMUST00000112658.8">
    <molecule id="Q80TJ1-1"/>
    <property type="protein sequence ID" value="ENSMUSP00000108277.2"/>
    <property type="gene ID" value="ENSMUSG00000054423.16"/>
</dbReference>
<dbReference type="GeneID" id="27062"/>
<dbReference type="KEGG" id="mmu:27062"/>
<dbReference type="UCSC" id="uc007sfu.1">
    <molecule id="Q80TJ1-1"/>
    <property type="organism name" value="mouse"/>
</dbReference>
<dbReference type="UCSC" id="uc007sfv.1">
    <molecule id="Q80TJ1-2"/>
    <property type="organism name" value="mouse"/>
</dbReference>
<dbReference type="AGR" id="MGI:1350922"/>
<dbReference type="CTD" id="8618"/>
<dbReference type="MGI" id="MGI:1350922">
    <property type="gene designation" value="Cadps"/>
</dbReference>
<dbReference type="VEuPathDB" id="HostDB:ENSMUSG00000054423"/>
<dbReference type="eggNOG" id="KOG3543">
    <property type="taxonomic scope" value="Eukaryota"/>
</dbReference>
<dbReference type="GeneTree" id="ENSGT00590000083094"/>
<dbReference type="HOGENOM" id="CLU_007068_0_0_1"/>
<dbReference type="InParanoid" id="Q80TJ1"/>
<dbReference type="OMA" id="FAFCATH"/>
<dbReference type="TreeFam" id="TF312963"/>
<dbReference type="BioGRID-ORCS" id="27062">
    <property type="hits" value="3 hits in 77 CRISPR screens"/>
</dbReference>
<dbReference type="CD-CODE" id="CE726F99">
    <property type="entry name" value="Postsynaptic density"/>
</dbReference>
<dbReference type="ChiTaRS" id="Cadps">
    <property type="organism name" value="mouse"/>
</dbReference>
<dbReference type="PRO" id="PR:Q80TJ1"/>
<dbReference type="Proteomes" id="UP000000589">
    <property type="component" value="Chromosome 14"/>
</dbReference>
<dbReference type="RNAct" id="Q80TJ1">
    <property type="molecule type" value="protein"/>
</dbReference>
<dbReference type="Bgee" id="ENSMUSG00000054423">
    <property type="expression patterns" value="Expressed in pontine nuclear group and 174 other cell types or tissues"/>
</dbReference>
<dbReference type="ExpressionAtlas" id="Q80TJ1">
    <property type="expression patterns" value="baseline and differential"/>
</dbReference>
<dbReference type="GO" id="GO:0031410">
    <property type="term" value="C:cytoplasmic vesicle"/>
    <property type="evidence" value="ECO:0000314"/>
    <property type="project" value="MGI"/>
</dbReference>
<dbReference type="GO" id="GO:0098978">
    <property type="term" value="C:glutamatergic synapse"/>
    <property type="evidence" value="ECO:0000314"/>
    <property type="project" value="SynGO"/>
</dbReference>
<dbReference type="GO" id="GO:0099012">
    <property type="term" value="C:neuronal dense core vesicle membrane"/>
    <property type="evidence" value="ECO:0007669"/>
    <property type="project" value="UniProtKB-SubCell"/>
</dbReference>
<dbReference type="GO" id="GO:0098793">
    <property type="term" value="C:presynapse"/>
    <property type="evidence" value="ECO:0007669"/>
    <property type="project" value="GOC"/>
</dbReference>
<dbReference type="GO" id="GO:0008289">
    <property type="term" value="F:lipid binding"/>
    <property type="evidence" value="ECO:0007669"/>
    <property type="project" value="UniProtKB-KW"/>
</dbReference>
<dbReference type="GO" id="GO:0046872">
    <property type="term" value="F:metal ion binding"/>
    <property type="evidence" value="ECO:0007669"/>
    <property type="project" value="UniProtKB-KW"/>
</dbReference>
<dbReference type="GO" id="GO:0019901">
    <property type="term" value="F:protein kinase binding"/>
    <property type="evidence" value="ECO:0000353"/>
    <property type="project" value="ParkinsonsUK-UCL"/>
</dbReference>
<dbReference type="GO" id="GO:0050432">
    <property type="term" value="P:catecholamine secretion"/>
    <property type="evidence" value="ECO:0000315"/>
    <property type="project" value="MGI"/>
</dbReference>
<dbReference type="GO" id="GO:0051649">
    <property type="term" value="P:establishment of localization in cell"/>
    <property type="evidence" value="ECO:0000315"/>
    <property type="project" value="MGI"/>
</dbReference>
<dbReference type="GO" id="GO:0099525">
    <property type="term" value="P:presynaptic dense core vesicle exocytosis"/>
    <property type="evidence" value="ECO:0000314"/>
    <property type="project" value="SynGO"/>
</dbReference>
<dbReference type="GO" id="GO:0015031">
    <property type="term" value="P:protein transport"/>
    <property type="evidence" value="ECO:0007669"/>
    <property type="project" value="UniProtKB-KW"/>
</dbReference>
<dbReference type="GO" id="GO:0016082">
    <property type="term" value="P:synaptic vesicle priming"/>
    <property type="evidence" value="ECO:0000314"/>
    <property type="project" value="SynGO"/>
</dbReference>
<dbReference type="GO" id="GO:0016050">
    <property type="term" value="P:vesicle organization"/>
    <property type="evidence" value="ECO:0000315"/>
    <property type="project" value="MGI"/>
</dbReference>
<dbReference type="CDD" id="cd01234">
    <property type="entry name" value="PH_CADPS"/>
    <property type="match status" value="1"/>
</dbReference>
<dbReference type="FunFam" id="2.30.29.30:FF:000007">
    <property type="entry name" value="Calcium-dependent secretion activator 2 isoform B"/>
    <property type="match status" value="1"/>
</dbReference>
<dbReference type="Gene3D" id="2.30.29.30">
    <property type="entry name" value="Pleckstrin-homology domain (PH domain)/Phosphotyrosine-binding domain (PTB)"/>
    <property type="match status" value="1"/>
</dbReference>
<dbReference type="InterPro" id="IPR000008">
    <property type="entry name" value="C2_dom"/>
</dbReference>
<dbReference type="InterPro" id="IPR033227">
    <property type="entry name" value="CAPS"/>
</dbReference>
<dbReference type="InterPro" id="IPR010439">
    <property type="entry name" value="MUN_dom"/>
</dbReference>
<dbReference type="InterPro" id="IPR014770">
    <property type="entry name" value="Munc13_1"/>
</dbReference>
<dbReference type="InterPro" id="IPR011993">
    <property type="entry name" value="PH-like_dom_sf"/>
</dbReference>
<dbReference type="InterPro" id="IPR001849">
    <property type="entry name" value="PH_domain"/>
</dbReference>
<dbReference type="PANTHER" id="PTHR12166">
    <property type="entry name" value="CALCIUM-DEPENDENT SECRETION ACTIVATOR"/>
    <property type="match status" value="1"/>
</dbReference>
<dbReference type="PANTHER" id="PTHR12166:SF6">
    <property type="entry name" value="CALCIUM-DEPENDENT SECRETION ACTIVATOR 1"/>
    <property type="match status" value="1"/>
</dbReference>
<dbReference type="Pfam" id="PF25341">
    <property type="entry name" value="C2_CAPS"/>
    <property type="match status" value="1"/>
</dbReference>
<dbReference type="Pfam" id="PF06292">
    <property type="entry name" value="MUN"/>
    <property type="match status" value="2"/>
</dbReference>
<dbReference type="Pfam" id="PF00169">
    <property type="entry name" value="PH"/>
    <property type="match status" value="1"/>
</dbReference>
<dbReference type="SMART" id="SM01145">
    <property type="entry name" value="DUF1041"/>
    <property type="match status" value="1"/>
</dbReference>
<dbReference type="SMART" id="SM00233">
    <property type="entry name" value="PH"/>
    <property type="match status" value="1"/>
</dbReference>
<dbReference type="SUPFAM" id="SSF50729">
    <property type="entry name" value="PH domain-like"/>
    <property type="match status" value="1"/>
</dbReference>
<dbReference type="PROSITE" id="PS50004">
    <property type="entry name" value="C2"/>
    <property type="match status" value="1"/>
</dbReference>
<dbReference type="PROSITE" id="PS51258">
    <property type="entry name" value="MHD1"/>
    <property type="match status" value="1"/>
</dbReference>
<dbReference type="PROSITE" id="PS50003">
    <property type="entry name" value="PH_DOMAIN"/>
    <property type="match status" value="1"/>
</dbReference>
<protein>
    <recommendedName>
        <fullName>Calcium-dependent secretion activator 1</fullName>
    </recommendedName>
    <alternativeName>
        <fullName>Calcium-dependent activator protein for secretion 1</fullName>
        <shortName>CAPS-1</shortName>
    </alternativeName>
</protein>
<name>CAPS1_MOUSE</name>
<accession>Q80TJ1</accession>
<accession>E9QN90</accession>
<accession>Q3TSP2</accession>
<accession>Q61374</accession>
<accession>Q6AXB4</accession>
<accession>Q6PGF0</accession>
<sequence length="1355" mass="153113">MLDPSSSEEESDEILEEERGKDVLGSAASGARLSPSRTSEGSAGSAGMGGSGAGAGVGAGGGGGSGASSGGGAGGLQPSSRAGGGRPSSPSPSVVSEKEKEELERLQKEEEERKKRLQLYVFVMRCIAYPFNAKQPTDMARRQQKISKQQLQTVKDRFQAFLNGETQIVADEAFMNAVQSYYEVFLKSDRVARMVQSGGCSANDSREVFKKHIEKRVRSLPEIDGLSKETVLSSWMAKFDAIYRGEEDPRKQQARMTASAASELILSKEQLYEMFQNILGIKKFEHQLLYNACQLDNPDEQAAQIRRELDGRLQMADQIARERKFPKFVSKEMENMYIEELKSSVNLLMANLESMPVSKGGEFKLQKLKRSHNASIIDMGEESENQLSKSDVLLSFSLEVVIMEVQGLKSLAPNRIVYCTMEVEGGEKLQTDQAEASKPTWGTQGDFSTTHALPAVKVKLFTESTGVLALEDKELGRVILHPTPNSPKQSEWHKMTVSKNCPDQDLKIKLAVRMDKPQNMKHSGYLWTIGKNVWKRWKKRFFVLVQVSQYTFAMCSYREKKAEPQELLQLDGYTVDYTDPQPGLEGGRAFFNAVKEGDTVIFASDDEQDRILWVQAMYRATGQSHKPVPPTQVQKLNAKGGNVPQLDAPISQFSGLKDADRAQKHGMDEFISSNPCNFDHASLFEMVQRLTLDHRLNDSYSCLGWFSPGQVFVLDEYCARNGVRGCHRHLCYLRDLLERAENGAMIDPTLLHYSFAFCASHVHGNRPDGIGTVTVEEKERFEEIKERLRVLLENQITHFRYCFPFGRPEGALKATLSLLERVLMKDIVTPVPQEEVKTVIRKCLEQAALVNYSRLSEYAKIEENQKDAENVGRLITPAKKLEDTIRLAELVIEVLQQNEEHHAEPHVDKGEAFAWWSDLMVEHAETFLSLFAVDMDAALEVQPPDTWDSFPLFQLLNDFLRTDYNLCNGKFHKHLQDLFAPLVVRYVDLMESSIAQSIHRGFERESWEPVKSLTSNLPNVNLPNVNLPKVPNLPVNIPLGIPQMPTFSAPSWMAAIYDADNGSGTSEDLFWKLDALQTFIRDLHWPEEEFGKHLEQRLKLMASDMIESCVKRTRIAFEVKLQKTSRSTDFRVPQSICTMFNVMVDAKAQSTKLCSMEMGQEHQYHSKIDELIEETVKEMITLLVAKFVTILEGVLAKLSRYDEGTLFSSFLSFTVKAASKYVDVPKPGMDVADAYVTFVRHSQDVLRDKVNEEMYIERLFDQWYNSSMNIICTWLTDRMDLQLHIYQLKTLIRMVKKTYRDFRLQGVLDSTLNSKTYETIRNRLTVEEATASVSEGGGLQGISMKDSDEEDEEDD</sequence>
<keyword id="KW-0025">Alternative splicing</keyword>
<keyword id="KW-0106">Calcium</keyword>
<keyword id="KW-0968">Cytoplasmic vesicle</keyword>
<keyword id="KW-0268">Exocytosis</keyword>
<keyword id="KW-0446">Lipid-binding</keyword>
<keyword id="KW-0472">Membrane</keyword>
<keyword id="KW-0479">Metal-binding</keyword>
<keyword id="KW-0597">Phosphoprotein</keyword>
<keyword id="KW-0653">Protein transport</keyword>
<keyword id="KW-1185">Reference proteome</keyword>
<keyword id="KW-0770">Synapse</keyword>
<keyword id="KW-0813">Transport</keyword>
<evidence type="ECO:0000250" key="1"/>
<evidence type="ECO:0000250" key="2">
    <source>
        <dbReference type="UniProtKB" id="Q62717"/>
    </source>
</evidence>
<evidence type="ECO:0000255" key="3">
    <source>
        <dbReference type="PROSITE-ProRule" id="PRU00041"/>
    </source>
</evidence>
<evidence type="ECO:0000255" key="4">
    <source>
        <dbReference type="PROSITE-ProRule" id="PRU00145"/>
    </source>
</evidence>
<evidence type="ECO:0000255" key="5">
    <source>
        <dbReference type="PROSITE-ProRule" id="PRU00587"/>
    </source>
</evidence>
<evidence type="ECO:0000256" key="6">
    <source>
        <dbReference type="SAM" id="MobiDB-lite"/>
    </source>
</evidence>
<evidence type="ECO:0000269" key="7">
    <source>
    </source>
</evidence>
<evidence type="ECO:0000269" key="8">
    <source>
    </source>
</evidence>
<evidence type="ECO:0000269" key="9">
    <source>
    </source>
</evidence>
<evidence type="ECO:0000303" key="10">
    <source>
    </source>
</evidence>
<evidence type="ECO:0000303" key="11">
    <source ref="1"/>
</evidence>
<evidence type="ECO:0000305" key="12"/>
<evidence type="ECO:0007744" key="13">
    <source>
    </source>
</evidence>
<proteinExistence type="evidence at protein level"/>